<evidence type="ECO:0000250" key="1">
    <source>
        <dbReference type="UniProtKB" id="Q6V0L0"/>
    </source>
</evidence>
<evidence type="ECO:0000255" key="2"/>
<evidence type="ECO:0000269" key="3">
    <source>
    </source>
</evidence>
<evidence type="ECO:0000269" key="4">
    <source>
    </source>
</evidence>
<evidence type="ECO:0000269" key="5">
    <source>
    </source>
</evidence>
<evidence type="ECO:0000269" key="6">
    <source>
    </source>
</evidence>
<evidence type="ECO:0000269" key="7">
    <source>
    </source>
</evidence>
<evidence type="ECO:0000303" key="8">
    <source>
    </source>
</evidence>
<evidence type="ECO:0000305" key="9"/>
<evidence type="ECO:0000305" key="10">
    <source>
    </source>
</evidence>
<evidence type="ECO:0000305" key="11">
    <source>
    </source>
</evidence>
<evidence type="ECO:0000305" key="12">
    <source>
    </source>
</evidence>
<evidence type="ECO:0000305" key="13">
    <source>
    </source>
</evidence>
<evidence type="ECO:0000305" key="14">
    <source>
    </source>
</evidence>
<evidence type="ECO:0000312" key="15">
    <source>
        <dbReference type="EMBL" id="AAI51099.1"/>
    </source>
</evidence>
<evidence type="ECO:0000312" key="16">
    <source>
        <dbReference type="EMBL" id="AAI51107.1"/>
    </source>
</evidence>
<evidence type="ECO:0000312" key="17">
    <source>
        <dbReference type="MGI" id="MGI:2679699"/>
    </source>
</evidence>
<protein>
    <recommendedName>
        <fullName>Cytochrome P450 26C1</fullName>
        <shortName evidence="8">Cyp26c1</shortName>
        <ecNumber evidence="13">1.14.14.1</ecNumber>
    </recommendedName>
    <alternativeName>
        <fullName>Cytochrome P450, family 26, subfamily c, polypeptide 1</fullName>
    </alternativeName>
</protein>
<reference key="1">
    <citation type="journal article" date="2009" name="PLoS Biol.">
        <title>Lineage-specific biology revealed by a finished genome assembly of the mouse.</title>
        <authorList>
            <person name="Church D.M."/>
            <person name="Goodstadt L."/>
            <person name="Hillier L.W."/>
            <person name="Zody M.C."/>
            <person name="Goldstein S."/>
            <person name="She X."/>
            <person name="Bult C.J."/>
            <person name="Agarwala R."/>
            <person name="Cherry J.L."/>
            <person name="DiCuccio M."/>
            <person name="Hlavina W."/>
            <person name="Kapustin Y."/>
            <person name="Meric P."/>
            <person name="Maglott D."/>
            <person name="Birtle Z."/>
            <person name="Marques A.C."/>
            <person name="Graves T."/>
            <person name="Zhou S."/>
            <person name="Teague B."/>
            <person name="Potamousis K."/>
            <person name="Churas C."/>
            <person name="Place M."/>
            <person name="Herschleb J."/>
            <person name="Runnheim R."/>
            <person name="Forrest D."/>
            <person name="Amos-Landgraf J."/>
            <person name="Schwartz D.C."/>
            <person name="Cheng Z."/>
            <person name="Lindblad-Toh K."/>
            <person name="Eichler E.E."/>
            <person name="Ponting C.P."/>
        </authorList>
    </citation>
    <scope>NUCLEOTIDE SEQUENCE [LARGE SCALE GENOMIC DNA]</scope>
    <source>
        <strain>C57BL/6J</strain>
    </source>
</reference>
<reference key="2">
    <citation type="journal article" date="2004" name="Genome Res.">
        <title>The status, quality, and expansion of the NIH full-length cDNA project: the Mammalian Gene Collection (MGC).</title>
        <authorList>
            <consortium name="The MGC Project Team"/>
        </authorList>
    </citation>
    <scope>NUCLEOTIDE SEQUENCE [LARGE SCALE MRNA]</scope>
    <source>
        <tissue evidence="15">Brain</tissue>
        <tissue evidence="16">Testis</tissue>
    </source>
</reference>
<reference key="3">
    <citation type="journal article" date="2003" name="Gene Expr. Patterns">
        <title>Cyp26C1 encodes a novel retinoic acid-metabolizing enzyme expressed in the hindbrain, inner ear, first branchial arch and tooth buds during murine development.</title>
        <authorList>
            <person name="Tahayato A."/>
            <person name="Dolle P."/>
            <person name="Petkovich M."/>
        </authorList>
    </citation>
    <scope>FUNCTION</scope>
    <scope>CATALYTIC ACTIVITY</scope>
    <scope>DEVELOPMENTAL STAGE</scope>
</reference>
<reference key="4">
    <citation type="journal article" date="2004" name="Dev. Biol.">
        <title>CYP26A1 and CYP26C1 cooperate in degrading retinoic acid within the equatorial retina during later eye development.</title>
        <authorList>
            <person name="Sakai Y."/>
            <person name="Luo T."/>
            <person name="McCaffery P."/>
            <person name="Hamada H."/>
            <person name="Draeger U.C."/>
        </authorList>
    </citation>
    <scope>DEVELOPMENTAL STAGE</scope>
    <scope>FUNCTION</scope>
</reference>
<reference key="5">
    <citation type="journal article" date="2005" name="Development">
        <title>Shifting boundaries of retinoic acid activity control hindbrain segmental gene expression.</title>
        <authorList>
            <person name="Sirbu I.O."/>
            <person name="Gresh L."/>
            <person name="Barra J."/>
            <person name="Duester G."/>
        </authorList>
    </citation>
    <scope>DEVELOPMENTAL STAGE</scope>
    <scope>FUNCTION</scope>
</reference>
<reference key="6">
    <citation type="journal article" date="2005" name="J. Biol. Chem.">
        <title>Metabolism and transactivation activity of 13,14-dihydroretinoic acid.</title>
        <authorList>
            <person name="Moise A.R."/>
            <person name="Kuksa V."/>
            <person name="Blaner W.S."/>
            <person name="Baehr W."/>
            <person name="Palczewski K."/>
        </authorList>
    </citation>
    <scope>FUNCTION</scope>
    <scope>CATALYTIC ACTIVITY</scope>
</reference>
<reference key="7">
    <citation type="journal article" date="2007" name="Dev. Biol.">
        <title>CYP26A1 and CYP26C1 cooperatively regulate anterior-posterior patterning of the developing brain and the production of migratory cranial neural crest cells in the mouse.</title>
        <authorList>
            <person name="Uehara M."/>
            <person name="Yashiro K."/>
            <person name="Mamiya S."/>
            <person name="Nishino J."/>
            <person name="Chambon P."/>
            <person name="Dolle P."/>
            <person name="Sakai Y."/>
        </authorList>
    </citation>
    <scope>DISRUPTION PHENOTYPE</scope>
    <scope>FUNCTION</scope>
</reference>
<proteinExistence type="evidence at protein level"/>
<comment type="function">
    <text evidence="1 4 6 7 10 11 12 13">A cytochrome P450 monooxygenase involved in the metabolism of retinoates (RAs), the active metabolites of vitamin A, and critical signaling molecules in animals (Probable) (PubMed:15911617). RAs exist as at least four different isomers: all-trans-RA (atRA), 9-cis-RA, 13-cis-RA, and 9,13-dicis-RA, where atRA is considered to be the biologically active isomer, although 9-cis-RA and 13-cis-RA also have activity (Probable). Catalyzes the oxidation of atRA primarily at C-4 (Probable). Oxidation of atRA limits its biological activity and initiates a degradative process leading to its eventual elimination, thereby contributes to the regulation of atRA homeostasis and signaling. Able to metabolize other RAs such as 9-cis with high efficiency (By similarity). Can oxidize all-trans-13,14-dihydroretinoate (DRA) to metabolites which could include all-trans-4-oxo-DRA, all-trans-4-hydroxy-DRA, all-trans-5,8-epoxy-DRA, and all-trans-18-hydroxy-DRA (Probable). Shares sequence similarity with other CYP26 family members, but has higher affinity to 9-cis-RA and is much less sensitive to the inhibitory effects of ketoconazole (By similarity). In cooperation with Cyp26a1, contributes to the CNS patterning and the development of regions of higher visual acuity (PubMed:15531370, PubMed:17067568).</text>
</comment>
<comment type="catalytic activity">
    <reaction evidence="10 13">
        <text>an organic molecule + reduced [NADPH--hemoprotein reductase] + O2 = an alcohol + oxidized [NADPH--hemoprotein reductase] + H2O + H(+)</text>
        <dbReference type="Rhea" id="RHEA:17149"/>
        <dbReference type="Rhea" id="RHEA-COMP:11964"/>
        <dbReference type="Rhea" id="RHEA-COMP:11965"/>
        <dbReference type="ChEBI" id="CHEBI:15377"/>
        <dbReference type="ChEBI" id="CHEBI:15378"/>
        <dbReference type="ChEBI" id="CHEBI:15379"/>
        <dbReference type="ChEBI" id="CHEBI:30879"/>
        <dbReference type="ChEBI" id="CHEBI:57618"/>
        <dbReference type="ChEBI" id="CHEBI:58210"/>
        <dbReference type="ChEBI" id="CHEBI:142491"/>
        <dbReference type="EC" id="1.14.14.1"/>
    </reaction>
    <physiologicalReaction direction="left-to-right" evidence="10 13">
        <dbReference type="Rhea" id="RHEA:17150"/>
    </physiologicalReaction>
</comment>
<comment type="catalytic activity">
    <reaction evidence="10 13">
        <text>all-trans-retinoate + reduced [NADPH--hemoprotein reductase] + O2 = all-trans-4-hydroxyretinoate + oxidized [NADPH--hemoprotein reductase] + H2O + H(+)</text>
        <dbReference type="Rhea" id="RHEA:51984"/>
        <dbReference type="Rhea" id="RHEA-COMP:11964"/>
        <dbReference type="Rhea" id="RHEA-COMP:11965"/>
        <dbReference type="ChEBI" id="CHEBI:15377"/>
        <dbReference type="ChEBI" id="CHEBI:15378"/>
        <dbReference type="ChEBI" id="CHEBI:15379"/>
        <dbReference type="ChEBI" id="CHEBI:35291"/>
        <dbReference type="ChEBI" id="CHEBI:57618"/>
        <dbReference type="ChEBI" id="CHEBI:58210"/>
        <dbReference type="ChEBI" id="CHEBI:134178"/>
    </reaction>
    <physiologicalReaction direction="left-to-right" evidence="10 13">
        <dbReference type="Rhea" id="RHEA:51985"/>
    </physiologicalReaction>
</comment>
<comment type="catalytic activity">
    <reaction evidence="13">
        <text>all-trans-4-hydroxyretinoate + reduced [NADPH--hemoprotein reductase] + O2 = all-trans-4-oxoretinoate + oxidized [NADPH--hemoprotein reductase] + 2 H2O + H(+)</text>
        <dbReference type="Rhea" id="RHEA:75851"/>
        <dbReference type="Rhea" id="RHEA-COMP:11964"/>
        <dbReference type="Rhea" id="RHEA-COMP:11965"/>
        <dbReference type="ChEBI" id="CHEBI:15377"/>
        <dbReference type="ChEBI" id="CHEBI:15378"/>
        <dbReference type="ChEBI" id="CHEBI:15379"/>
        <dbReference type="ChEBI" id="CHEBI:57618"/>
        <dbReference type="ChEBI" id="CHEBI:58210"/>
        <dbReference type="ChEBI" id="CHEBI:134178"/>
        <dbReference type="ChEBI" id="CHEBI:134186"/>
    </reaction>
    <physiologicalReaction direction="left-to-right" evidence="13">
        <dbReference type="Rhea" id="RHEA:75852"/>
    </physiologicalReaction>
</comment>
<comment type="catalytic activity">
    <reaction evidence="1">
        <text>9-cis-retinoate + reduced [NADPH--hemoprotein reductase] + O2 = 9-cis-4-hydroxyretinoate + oxidized [NADPH--hemoprotein reductase] + H2O + H(+)</text>
        <dbReference type="Rhea" id="RHEA:75847"/>
        <dbReference type="Rhea" id="RHEA-COMP:11964"/>
        <dbReference type="Rhea" id="RHEA-COMP:11965"/>
        <dbReference type="ChEBI" id="CHEBI:15377"/>
        <dbReference type="ChEBI" id="CHEBI:15378"/>
        <dbReference type="ChEBI" id="CHEBI:15379"/>
        <dbReference type="ChEBI" id="CHEBI:57618"/>
        <dbReference type="ChEBI" id="CHEBI:58210"/>
        <dbReference type="ChEBI" id="CHEBI:78630"/>
        <dbReference type="ChEBI" id="CHEBI:139253"/>
    </reaction>
    <physiologicalReaction direction="left-to-right" evidence="1">
        <dbReference type="Rhea" id="RHEA:75848"/>
    </physiologicalReaction>
</comment>
<comment type="catalytic activity">
    <reaction evidence="1">
        <text>9-cis-4-hydroxyretinoate + reduced [NADPH--hemoprotein reductase] + O2 = 9-cis-4-oxoretinoate + oxidized [NADPH--hemoprotein reductase] + 2 H2O + H(+)</text>
        <dbReference type="Rhea" id="RHEA:75855"/>
        <dbReference type="Rhea" id="RHEA-COMP:11964"/>
        <dbReference type="Rhea" id="RHEA-COMP:11965"/>
        <dbReference type="ChEBI" id="CHEBI:15377"/>
        <dbReference type="ChEBI" id="CHEBI:15378"/>
        <dbReference type="ChEBI" id="CHEBI:15379"/>
        <dbReference type="ChEBI" id="CHEBI:57618"/>
        <dbReference type="ChEBI" id="CHEBI:58210"/>
        <dbReference type="ChEBI" id="CHEBI:139253"/>
        <dbReference type="ChEBI" id="CHEBI:139254"/>
    </reaction>
    <physiologicalReaction direction="left-to-right" evidence="1">
        <dbReference type="Rhea" id="RHEA:75856"/>
    </physiologicalReaction>
</comment>
<comment type="catalytic activity">
    <reaction evidence="13">
        <text>all-trans-4-hydroxy-13,14-dihydroretinoate + reduced [NADPH--hemoprotein reductase] + O2 = all-trans-4-oxo-13,14-dihydroretinoate + oxidized [NADPH--hemoprotein reductase] + 2 H2O + H(+)</text>
        <dbReference type="Rhea" id="RHEA:75859"/>
        <dbReference type="Rhea" id="RHEA-COMP:11964"/>
        <dbReference type="Rhea" id="RHEA-COMP:11965"/>
        <dbReference type="ChEBI" id="CHEBI:15377"/>
        <dbReference type="ChEBI" id="CHEBI:15378"/>
        <dbReference type="ChEBI" id="CHEBI:15379"/>
        <dbReference type="ChEBI" id="CHEBI:57618"/>
        <dbReference type="ChEBI" id="CHEBI:58210"/>
        <dbReference type="ChEBI" id="CHEBI:194184"/>
        <dbReference type="ChEBI" id="CHEBI:194478"/>
    </reaction>
    <physiologicalReaction direction="left-to-right" evidence="13">
        <dbReference type="Rhea" id="RHEA:75860"/>
    </physiologicalReaction>
</comment>
<comment type="catalytic activity">
    <reaction evidence="13">
        <text>all-trans-13,14-dihydroretinoate + reduced [NADPH--hemoprotein reductase] + O2 = all-trans-4-hydroxy-13,14-dihydroretinoate + oxidized [NADPH--hemoprotein reductase] + H2O + H(+)</text>
        <dbReference type="Rhea" id="RHEA:75863"/>
        <dbReference type="Rhea" id="RHEA-COMP:11964"/>
        <dbReference type="Rhea" id="RHEA-COMP:11965"/>
        <dbReference type="ChEBI" id="CHEBI:15377"/>
        <dbReference type="ChEBI" id="CHEBI:15378"/>
        <dbReference type="ChEBI" id="CHEBI:15379"/>
        <dbReference type="ChEBI" id="CHEBI:57618"/>
        <dbReference type="ChEBI" id="CHEBI:58210"/>
        <dbReference type="ChEBI" id="CHEBI:194183"/>
        <dbReference type="ChEBI" id="CHEBI:194478"/>
    </reaction>
    <physiologicalReaction direction="left-to-right" evidence="13">
        <dbReference type="Rhea" id="RHEA:75864"/>
    </physiologicalReaction>
</comment>
<comment type="cofactor">
    <cofactor evidence="14">
        <name>heme</name>
        <dbReference type="ChEBI" id="CHEBI:30413"/>
    </cofactor>
</comment>
<comment type="subcellular location">
    <subcellularLocation>
        <location evidence="2">Membrane</location>
        <topology evidence="2">Single-pass membrane protein</topology>
    </subcellularLocation>
</comment>
<comment type="developmental stage">
    <text evidence="3 4 5">During murine development it is initially expressed in the hindbrain and first branchial arch, while in late stages of embryogenesis, it can only be found in tooth buds and in inner ear structures (PubMed:12915310, PubMed:15872003). At E8.0, it is specifically expressed in prospective rhombomeres 2 (r2) and 4 (r4), and in the rostral portion of the first branchial arch (PubMed:12915310, PubMed:15872003). At E8.5 it is expressed in the mid-portion of the neuroepithelium of the prospective hindbrain and the branchial arch ectoderm (PubMed:12915310). By E9.5, its expression is observed in the maxillary and the mandibular components of the first branchial arch, in r2 and in the lateral epibranchial placodes (PubMed:12915310). By E10.5, it displays a specific pattern of expression in the cervical mesenchyme and is restricted to a few cells ventral to the pontine flexure (PubMed:12915310). By E11.5, its expression is confined only to a narrow band in the lateral cervical mesenchyme (PubMed:12915310). At E12.5, it is expressed along the mouth epithelium and at the level of the dental lamina, as well as in the cervical mesenchyme caudal to the otic vesicle (PubMed:12915310). By E14.5 there is strong expression in the dental epithelium (presumptive enamel organ), whereas it almost disappears from the mouth and tongue epithelium (PubMed:12915310). By E15, strongly expressed in a stripe across the retina (PubMed:15531370). At E16.5 expressed only in the enamel organ (specifically the inner dental epithelium) of the various tooth anlagen (PubMed:12915310). At E18.5 it is highly expressed in the second molar, but almost absent in the first molar epithelium (PubMed:12915310). Expression continues for several days postnatally, and persists longer in the temporal than nasal retina, disappearing around P14 (PubMed:15531370).</text>
</comment>
<comment type="disruption phenotype">
    <text evidence="7">The knockout presents no discernible embryological defects, however double homozygous mutants for Cyp26a1/c1 display a more severe RA embryopathy phenotype than either mutant alone, with lethality by E11.0. Among others, this includes CNS patterning abnormalities, a reduced size of the head, eye, frontonasal region and an open neural tube between the fore and hindbrain.</text>
</comment>
<comment type="similarity">
    <text evidence="9">Belongs to the cytochrome P450 family.</text>
</comment>
<gene>
    <name evidence="8 17" type="primary">Cyp26c1</name>
</gene>
<dbReference type="EC" id="1.14.14.1" evidence="13"/>
<dbReference type="EMBL" id="BC151098">
    <property type="protein sequence ID" value="AAI51099.1"/>
    <property type="molecule type" value="mRNA"/>
</dbReference>
<dbReference type="EMBL" id="BC151106">
    <property type="protein sequence ID" value="AAI51107.1"/>
    <property type="molecule type" value="mRNA"/>
</dbReference>
<dbReference type="CCDS" id="CCDS50428.1"/>
<dbReference type="RefSeq" id="NP_001098671.1">
    <property type="nucleotide sequence ID" value="NM_001105201.1"/>
</dbReference>
<dbReference type="RefSeq" id="XP_017173748.1">
    <property type="nucleotide sequence ID" value="XM_017318259.3"/>
</dbReference>
<dbReference type="SMR" id="B2RXA7"/>
<dbReference type="FunCoup" id="B2RXA7">
    <property type="interactions" value="128"/>
</dbReference>
<dbReference type="STRING" id="10090.ENSMUSP00000073105"/>
<dbReference type="PhosphoSitePlus" id="B2RXA7"/>
<dbReference type="PaxDb" id="10090-ENSMUSP00000073105"/>
<dbReference type="Antibodypedia" id="45703">
    <property type="antibodies" value="145 antibodies from 25 providers"/>
</dbReference>
<dbReference type="Ensembl" id="ENSMUST00000073391.5">
    <property type="protein sequence ID" value="ENSMUSP00000073105.5"/>
    <property type="gene ID" value="ENSMUSG00000062432.5"/>
</dbReference>
<dbReference type="GeneID" id="546726"/>
<dbReference type="KEGG" id="mmu:546726"/>
<dbReference type="UCSC" id="uc012ble.1">
    <property type="organism name" value="mouse"/>
</dbReference>
<dbReference type="AGR" id="MGI:2679699"/>
<dbReference type="CTD" id="340665"/>
<dbReference type="MGI" id="MGI:2679699">
    <property type="gene designation" value="Cyp26c1"/>
</dbReference>
<dbReference type="VEuPathDB" id="HostDB:ENSMUSG00000062432"/>
<dbReference type="eggNOG" id="KOG0157">
    <property type="taxonomic scope" value="Eukaryota"/>
</dbReference>
<dbReference type="GeneTree" id="ENSGT00800000124060"/>
<dbReference type="HOGENOM" id="CLU_001570_15_6_1"/>
<dbReference type="InParanoid" id="B2RXA7"/>
<dbReference type="OMA" id="MIIHSTR"/>
<dbReference type="OrthoDB" id="1372046at2759"/>
<dbReference type="TreeFam" id="TF105093"/>
<dbReference type="Reactome" id="R-MMU-211916">
    <property type="pathway name" value="Vitamins"/>
</dbReference>
<dbReference type="Reactome" id="R-MMU-5365859">
    <property type="pathway name" value="RA biosynthesis pathway"/>
</dbReference>
<dbReference type="BioGRID-ORCS" id="546726">
    <property type="hits" value="1 hit in 77 CRISPR screens"/>
</dbReference>
<dbReference type="PRO" id="PR:B2RXA7"/>
<dbReference type="Proteomes" id="UP000000589">
    <property type="component" value="Chromosome 19"/>
</dbReference>
<dbReference type="RNAct" id="B2RXA7">
    <property type="molecule type" value="protein"/>
</dbReference>
<dbReference type="Bgee" id="ENSMUSG00000062432">
    <property type="expression patterns" value="Expressed in rhombomere 2 and 34 other cell types or tissues"/>
</dbReference>
<dbReference type="GO" id="GO:0016020">
    <property type="term" value="C:membrane"/>
    <property type="evidence" value="ECO:0007669"/>
    <property type="project" value="UniProtKB-SubCell"/>
</dbReference>
<dbReference type="GO" id="GO:0020037">
    <property type="term" value="F:heme binding"/>
    <property type="evidence" value="ECO:0007669"/>
    <property type="project" value="InterPro"/>
</dbReference>
<dbReference type="GO" id="GO:0005506">
    <property type="term" value="F:iron ion binding"/>
    <property type="evidence" value="ECO:0007669"/>
    <property type="project" value="InterPro"/>
</dbReference>
<dbReference type="GO" id="GO:0008401">
    <property type="term" value="F:retinoic acid 4-hydroxylase activity"/>
    <property type="evidence" value="ECO:0007669"/>
    <property type="project" value="Ensembl"/>
</dbReference>
<dbReference type="GO" id="GO:0001972">
    <property type="term" value="F:retinoic acid binding"/>
    <property type="evidence" value="ECO:0007669"/>
    <property type="project" value="Ensembl"/>
</dbReference>
<dbReference type="GO" id="GO:0009952">
    <property type="term" value="P:anterior/posterior pattern specification"/>
    <property type="evidence" value="ECO:0000316"/>
    <property type="project" value="MGI"/>
</dbReference>
<dbReference type="GO" id="GO:0007417">
    <property type="term" value="P:central nervous system development"/>
    <property type="evidence" value="ECO:0000316"/>
    <property type="project" value="MGI"/>
</dbReference>
<dbReference type="GO" id="GO:0014032">
    <property type="term" value="P:neural crest cell development"/>
    <property type="evidence" value="ECO:0000316"/>
    <property type="project" value="MGI"/>
</dbReference>
<dbReference type="GO" id="GO:0048284">
    <property type="term" value="P:organelle fusion"/>
    <property type="evidence" value="ECO:0000316"/>
    <property type="project" value="MGI"/>
</dbReference>
<dbReference type="GO" id="GO:0034653">
    <property type="term" value="P:retinoic acid catabolic process"/>
    <property type="evidence" value="ECO:0007669"/>
    <property type="project" value="Ensembl"/>
</dbReference>
<dbReference type="FunFam" id="1.10.630.10:FF:000009">
    <property type="entry name" value="Cytochrome P450 26B1 isoform 1"/>
    <property type="match status" value="1"/>
</dbReference>
<dbReference type="Gene3D" id="1.10.630.10">
    <property type="entry name" value="Cytochrome P450"/>
    <property type="match status" value="1"/>
</dbReference>
<dbReference type="InterPro" id="IPR001128">
    <property type="entry name" value="Cyt_P450"/>
</dbReference>
<dbReference type="InterPro" id="IPR017972">
    <property type="entry name" value="Cyt_P450_CS"/>
</dbReference>
<dbReference type="InterPro" id="IPR002401">
    <property type="entry name" value="Cyt_P450_E_grp-I"/>
</dbReference>
<dbReference type="InterPro" id="IPR036396">
    <property type="entry name" value="Cyt_P450_sf"/>
</dbReference>
<dbReference type="PANTHER" id="PTHR24286">
    <property type="entry name" value="CYTOCHROME P450 26"/>
    <property type="match status" value="1"/>
</dbReference>
<dbReference type="PANTHER" id="PTHR24286:SF100">
    <property type="entry name" value="CYTOCHROME P450 26C1"/>
    <property type="match status" value="1"/>
</dbReference>
<dbReference type="Pfam" id="PF00067">
    <property type="entry name" value="p450"/>
    <property type="match status" value="1"/>
</dbReference>
<dbReference type="PRINTS" id="PR00463">
    <property type="entry name" value="EP450I"/>
</dbReference>
<dbReference type="PRINTS" id="PR00385">
    <property type="entry name" value="P450"/>
</dbReference>
<dbReference type="SUPFAM" id="SSF48264">
    <property type="entry name" value="Cytochrome P450"/>
    <property type="match status" value="1"/>
</dbReference>
<dbReference type="PROSITE" id="PS00086">
    <property type="entry name" value="CYTOCHROME_P450"/>
    <property type="match status" value="1"/>
</dbReference>
<feature type="chain" id="PRO_0000458227" description="Cytochrome P450 26C1">
    <location>
        <begin position="1"/>
        <end position="518"/>
    </location>
</feature>
<feature type="transmembrane region" description="Helical" evidence="2">
    <location>
        <begin position="293"/>
        <end position="313"/>
    </location>
</feature>
<feature type="binding site" description="axial binding residue" evidence="2">
    <location>
        <position position="455"/>
    </location>
    <ligand>
        <name>heme</name>
        <dbReference type="ChEBI" id="CHEBI:30413"/>
    </ligand>
    <ligandPart>
        <name>Fe</name>
        <dbReference type="ChEBI" id="CHEBI:18248"/>
    </ligandPart>
</feature>
<sequence length="518" mass="57026">MISWGLSCLSVLGAAGTTLLCAGLLLGLAQQLWTLRWTLSRDWASTLPLPKGSMGWPFFGETLHWLVQGSRFHSSRRERYGTVFKTHLLGRPVIRVSGAENVRTILLGEHRLVRSQWPQSAHILLGSHTLLGAVGEPHRQRRKVLARVFSRSSLEQFVPRLQGALRREVRSWCAAQRPVAVYQAAKALTFRMAARILLGLQLDEARCTELAHTFEQLVENLFSLPLDVPFSGLRKGIRARDQLYEHLDEAVAEKLQEKQTAEPGDALLLIINSARELGHEPSVQELKELAVELLFAAFFTTASASTSLILLLLQHPAAITKIQQELSAQGLGRACTCTPRASGSPPDCGCEPDLSLAMLGRLRYVDCVVKEVLRLLPPVSGGYRTALRTFELDGYQIPKGWSVMYSIRDTHETAAVYRSPPEGFDPERFGVESGDARGSGGRFHYIPFGGGARSCLGQELAQAVLQLLAVELVRTARWELATPAFPVMQTVPIVHPVDGLLLFFHPLPTSGAGDGLPF</sequence>
<organism>
    <name type="scientific">Mus musculus</name>
    <name type="common">Mouse</name>
    <dbReference type="NCBI Taxonomy" id="10090"/>
    <lineage>
        <taxon>Eukaryota</taxon>
        <taxon>Metazoa</taxon>
        <taxon>Chordata</taxon>
        <taxon>Craniata</taxon>
        <taxon>Vertebrata</taxon>
        <taxon>Euteleostomi</taxon>
        <taxon>Mammalia</taxon>
        <taxon>Eutheria</taxon>
        <taxon>Euarchontoglires</taxon>
        <taxon>Glires</taxon>
        <taxon>Rodentia</taxon>
        <taxon>Myomorpha</taxon>
        <taxon>Muroidea</taxon>
        <taxon>Muridae</taxon>
        <taxon>Murinae</taxon>
        <taxon>Mus</taxon>
        <taxon>Mus</taxon>
    </lineage>
</organism>
<keyword id="KW-0349">Heme</keyword>
<keyword id="KW-0408">Iron</keyword>
<keyword id="KW-0443">Lipid metabolism</keyword>
<keyword id="KW-0472">Membrane</keyword>
<keyword id="KW-0479">Metal-binding</keyword>
<keyword id="KW-0503">Monooxygenase</keyword>
<keyword id="KW-0560">Oxidoreductase</keyword>
<keyword id="KW-1185">Reference proteome</keyword>
<keyword id="KW-0812">Transmembrane</keyword>
<keyword id="KW-1133">Transmembrane helix</keyword>
<accession>B2RXA7</accession>
<name>CP26C_MOUSE</name>